<comment type="function">
    <text evidence="1">Catalyzes the phosphorylation of the position 2 hydroxy group of 4-diphosphocytidyl-2C-methyl-D-erythritol.</text>
</comment>
<comment type="catalytic activity">
    <reaction evidence="1">
        <text>4-CDP-2-C-methyl-D-erythritol + ATP = 4-CDP-2-C-methyl-D-erythritol 2-phosphate + ADP + H(+)</text>
        <dbReference type="Rhea" id="RHEA:18437"/>
        <dbReference type="ChEBI" id="CHEBI:15378"/>
        <dbReference type="ChEBI" id="CHEBI:30616"/>
        <dbReference type="ChEBI" id="CHEBI:57823"/>
        <dbReference type="ChEBI" id="CHEBI:57919"/>
        <dbReference type="ChEBI" id="CHEBI:456216"/>
        <dbReference type="EC" id="2.7.1.148"/>
    </reaction>
</comment>
<comment type="pathway">
    <text evidence="1">Isoprenoid biosynthesis; isopentenyl diphosphate biosynthesis via DXP pathway; isopentenyl diphosphate from 1-deoxy-D-xylulose 5-phosphate: step 3/6.</text>
</comment>
<comment type="similarity">
    <text evidence="1">Belongs to the GHMP kinase family. IspE subfamily.</text>
</comment>
<proteinExistence type="inferred from homology"/>
<sequence>MILKAYAKINLTLDVLSKRDDGYHEIRTIMQTVDLYDIINIEKIEEDSIIVTTSSENIPTDNKNHAYIAASLVKERFGVKEGVKIHIQKNIPISAGLAGGSTDAAAVLRGLNKLFGLNLSQNELIELGREIGADVPFCLVGGTALCEGIGEKVTKLKSAPKMNILIAKPEVYVSTQAVYEALDLSKVKKRPNTDAMIVAIEEGNIREIAKNLCNVLETVTVNQYPVINRVKDIMRNHNALGTVMTGSGPAVFGIFANKYDALKAADRLKVFIKEIILTTTCENEFFSNEE</sequence>
<dbReference type="EC" id="2.7.1.148" evidence="1"/>
<dbReference type="EMBL" id="CP000679">
    <property type="protein sequence ID" value="ABP67803.1"/>
    <property type="molecule type" value="Genomic_DNA"/>
</dbReference>
<dbReference type="RefSeq" id="WP_011917729.1">
    <property type="nucleotide sequence ID" value="NC_009437.1"/>
</dbReference>
<dbReference type="SMR" id="A4XLL8"/>
<dbReference type="STRING" id="351627.Csac_2225"/>
<dbReference type="KEGG" id="csc:Csac_2225"/>
<dbReference type="eggNOG" id="COG1947">
    <property type="taxonomic scope" value="Bacteria"/>
</dbReference>
<dbReference type="HOGENOM" id="CLU_053057_1_1_9"/>
<dbReference type="OrthoDB" id="9809438at2"/>
<dbReference type="UniPathway" id="UPA00056">
    <property type="reaction ID" value="UER00094"/>
</dbReference>
<dbReference type="Proteomes" id="UP000000256">
    <property type="component" value="Chromosome"/>
</dbReference>
<dbReference type="GO" id="GO:0050515">
    <property type="term" value="F:4-(cytidine 5'-diphospho)-2-C-methyl-D-erythritol kinase activity"/>
    <property type="evidence" value="ECO:0007669"/>
    <property type="project" value="UniProtKB-UniRule"/>
</dbReference>
<dbReference type="GO" id="GO:0005524">
    <property type="term" value="F:ATP binding"/>
    <property type="evidence" value="ECO:0007669"/>
    <property type="project" value="UniProtKB-UniRule"/>
</dbReference>
<dbReference type="GO" id="GO:0019288">
    <property type="term" value="P:isopentenyl diphosphate biosynthetic process, methylerythritol 4-phosphate pathway"/>
    <property type="evidence" value="ECO:0007669"/>
    <property type="project" value="UniProtKB-UniRule"/>
</dbReference>
<dbReference type="GO" id="GO:0016114">
    <property type="term" value="P:terpenoid biosynthetic process"/>
    <property type="evidence" value="ECO:0007669"/>
    <property type="project" value="InterPro"/>
</dbReference>
<dbReference type="FunFam" id="3.30.230.10:FF:000029">
    <property type="entry name" value="4-diphosphocytidyl-2-C-methyl-D-erythritol kinase"/>
    <property type="match status" value="1"/>
</dbReference>
<dbReference type="Gene3D" id="3.30.230.10">
    <property type="match status" value="1"/>
</dbReference>
<dbReference type="Gene3D" id="3.30.70.890">
    <property type="entry name" value="GHMP kinase, C-terminal domain"/>
    <property type="match status" value="1"/>
</dbReference>
<dbReference type="HAMAP" id="MF_00061">
    <property type="entry name" value="IspE"/>
    <property type="match status" value="1"/>
</dbReference>
<dbReference type="InterPro" id="IPR013750">
    <property type="entry name" value="GHMP_kinase_C_dom"/>
</dbReference>
<dbReference type="InterPro" id="IPR036554">
    <property type="entry name" value="GHMP_kinase_C_sf"/>
</dbReference>
<dbReference type="InterPro" id="IPR006204">
    <property type="entry name" value="GHMP_kinase_N_dom"/>
</dbReference>
<dbReference type="InterPro" id="IPR004424">
    <property type="entry name" value="IspE"/>
</dbReference>
<dbReference type="InterPro" id="IPR020568">
    <property type="entry name" value="Ribosomal_Su5_D2-typ_SF"/>
</dbReference>
<dbReference type="InterPro" id="IPR014721">
    <property type="entry name" value="Ribsml_uS5_D2-typ_fold_subgr"/>
</dbReference>
<dbReference type="NCBIfam" id="TIGR00154">
    <property type="entry name" value="ispE"/>
    <property type="match status" value="1"/>
</dbReference>
<dbReference type="NCBIfam" id="NF011202">
    <property type="entry name" value="PRK14608.1"/>
    <property type="match status" value="1"/>
</dbReference>
<dbReference type="PANTHER" id="PTHR43527">
    <property type="entry name" value="4-DIPHOSPHOCYTIDYL-2-C-METHYL-D-ERYTHRITOL KINASE, CHLOROPLASTIC"/>
    <property type="match status" value="1"/>
</dbReference>
<dbReference type="PANTHER" id="PTHR43527:SF2">
    <property type="entry name" value="4-DIPHOSPHOCYTIDYL-2-C-METHYL-D-ERYTHRITOL KINASE, CHLOROPLASTIC"/>
    <property type="match status" value="1"/>
</dbReference>
<dbReference type="Pfam" id="PF08544">
    <property type="entry name" value="GHMP_kinases_C"/>
    <property type="match status" value="1"/>
</dbReference>
<dbReference type="Pfam" id="PF00288">
    <property type="entry name" value="GHMP_kinases_N"/>
    <property type="match status" value="1"/>
</dbReference>
<dbReference type="PIRSF" id="PIRSF010376">
    <property type="entry name" value="IspE"/>
    <property type="match status" value="1"/>
</dbReference>
<dbReference type="SUPFAM" id="SSF55060">
    <property type="entry name" value="GHMP Kinase, C-terminal domain"/>
    <property type="match status" value="1"/>
</dbReference>
<dbReference type="SUPFAM" id="SSF54211">
    <property type="entry name" value="Ribosomal protein S5 domain 2-like"/>
    <property type="match status" value="1"/>
</dbReference>
<gene>
    <name evidence="1" type="primary">ispE</name>
    <name type="ordered locus">Csac_2225</name>
</gene>
<keyword id="KW-0067">ATP-binding</keyword>
<keyword id="KW-0414">Isoprene biosynthesis</keyword>
<keyword id="KW-0418">Kinase</keyword>
<keyword id="KW-0547">Nucleotide-binding</keyword>
<keyword id="KW-0808">Transferase</keyword>
<organism>
    <name type="scientific">Caldicellulosiruptor saccharolyticus (strain ATCC 43494 / DSM 8903 / Tp8T 6331)</name>
    <dbReference type="NCBI Taxonomy" id="351627"/>
    <lineage>
        <taxon>Bacteria</taxon>
        <taxon>Bacillati</taxon>
        <taxon>Bacillota</taxon>
        <taxon>Bacillota incertae sedis</taxon>
        <taxon>Caldicellulosiruptorales</taxon>
        <taxon>Caldicellulosiruptoraceae</taxon>
        <taxon>Caldicellulosiruptor</taxon>
    </lineage>
</organism>
<feature type="chain" id="PRO_1000007827" description="4-diphosphocytidyl-2-C-methyl-D-erythritol kinase">
    <location>
        <begin position="1"/>
        <end position="290"/>
    </location>
</feature>
<feature type="active site" evidence="1">
    <location>
        <position position="8"/>
    </location>
</feature>
<feature type="active site" evidence="1">
    <location>
        <position position="134"/>
    </location>
</feature>
<feature type="binding site" evidence="1">
    <location>
        <begin position="92"/>
        <end position="102"/>
    </location>
    <ligand>
        <name>ATP</name>
        <dbReference type="ChEBI" id="CHEBI:30616"/>
    </ligand>
</feature>
<protein>
    <recommendedName>
        <fullName evidence="1">4-diphosphocytidyl-2-C-methyl-D-erythritol kinase</fullName>
        <shortName evidence="1">CMK</shortName>
        <ecNumber evidence="1">2.7.1.148</ecNumber>
    </recommendedName>
    <alternativeName>
        <fullName evidence="1">4-(cytidine-5'-diphospho)-2-C-methyl-D-erythritol kinase</fullName>
    </alternativeName>
</protein>
<reference key="1">
    <citation type="submission" date="2007-04" db="EMBL/GenBank/DDBJ databases">
        <title>Genome sequence of the thermophilic hydrogen-producing bacterium Caldicellulosiruptor saccharolyticus DSM 8903.</title>
        <authorList>
            <person name="Copeland A."/>
            <person name="Lucas S."/>
            <person name="Lapidus A."/>
            <person name="Barry K."/>
            <person name="Detter J.C."/>
            <person name="Glavina del Rio T."/>
            <person name="Hammon N."/>
            <person name="Israni S."/>
            <person name="Dalin E."/>
            <person name="Tice H."/>
            <person name="Pitluck S."/>
            <person name="Kiss H."/>
            <person name="Brettin T."/>
            <person name="Bruce D."/>
            <person name="Han C."/>
            <person name="Schmutz J."/>
            <person name="Larimer F."/>
            <person name="Land M."/>
            <person name="Hauser L."/>
            <person name="Kyrpides N."/>
            <person name="Lykidis A."/>
            <person name="van de Werken H.J.G."/>
            <person name="Verhaart M.R.A."/>
            <person name="VanFossen A.L."/>
            <person name="Lewis D.L."/>
            <person name="Nichols J.D."/>
            <person name="Goorissen H.P."/>
            <person name="van Niel E.W.J."/>
            <person name="Stams F.J.M."/>
            <person name="Willquist K.U."/>
            <person name="Ward D.E."/>
            <person name="van der Oost J."/>
            <person name="Kelly R.M."/>
            <person name="Kengen S.M.W."/>
            <person name="Richardson P."/>
        </authorList>
    </citation>
    <scope>NUCLEOTIDE SEQUENCE [LARGE SCALE GENOMIC DNA]</scope>
    <source>
        <strain>ATCC 43494 / DSM 8903 / Tp8T 6331</strain>
    </source>
</reference>
<accession>A4XLL8</accession>
<name>ISPE_CALS8</name>
<evidence type="ECO:0000255" key="1">
    <source>
        <dbReference type="HAMAP-Rule" id="MF_00061"/>
    </source>
</evidence>